<keyword id="KW-1185">Reference proteome</keyword>
<keyword id="KW-0687">Ribonucleoprotein</keyword>
<keyword id="KW-0689">Ribosomal protein</keyword>
<comment type="similarity">
    <text evidence="1">Belongs to the bacterial ribosomal protein bL27 family.</text>
</comment>
<gene>
    <name evidence="1" type="primary">rpmA</name>
    <name type="ordered locus">Saro_0930</name>
</gene>
<feature type="chain" id="PRO_1000017536" description="Large ribosomal subunit protein bL27">
    <location>
        <begin position="1"/>
        <end position="89"/>
    </location>
</feature>
<feature type="region of interest" description="Disordered" evidence="2">
    <location>
        <begin position="1"/>
        <end position="21"/>
    </location>
</feature>
<evidence type="ECO:0000255" key="1">
    <source>
        <dbReference type="HAMAP-Rule" id="MF_00539"/>
    </source>
</evidence>
<evidence type="ECO:0000256" key="2">
    <source>
        <dbReference type="SAM" id="MobiDB-lite"/>
    </source>
</evidence>
<evidence type="ECO:0000305" key="3"/>
<proteinExistence type="inferred from homology"/>
<sequence length="89" mass="9498">MAHKKAGGSSRNGRDSAGRRLGVKKFGGQEVVGGNIIIRQRGTRVYPGANVGMGKDHTLFALAEGRVRFHAGKLGRKYVSVDMMAEAAE</sequence>
<organism>
    <name type="scientific">Novosphingobium aromaticivorans (strain ATCC 700278 / DSM 12444 / CCUG 56034 / CIP 105152 / NBRC 16084 / F199)</name>
    <dbReference type="NCBI Taxonomy" id="279238"/>
    <lineage>
        <taxon>Bacteria</taxon>
        <taxon>Pseudomonadati</taxon>
        <taxon>Pseudomonadota</taxon>
        <taxon>Alphaproteobacteria</taxon>
        <taxon>Sphingomonadales</taxon>
        <taxon>Sphingomonadaceae</taxon>
        <taxon>Novosphingobium</taxon>
    </lineage>
</organism>
<reference key="1">
    <citation type="submission" date="2006-01" db="EMBL/GenBank/DDBJ databases">
        <title>Complete sequence of Novosphingobium aromaticivorans DSM 12444.</title>
        <authorList>
            <consortium name="US DOE Joint Genome Institute"/>
            <person name="Copeland A."/>
            <person name="Lucas S."/>
            <person name="Lapidus A."/>
            <person name="Barry K."/>
            <person name="Detter J.C."/>
            <person name="Glavina T."/>
            <person name="Hammon N."/>
            <person name="Israni S."/>
            <person name="Pitluck S."/>
            <person name="Chain P."/>
            <person name="Malfatti S."/>
            <person name="Shin M."/>
            <person name="Vergez L."/>
            <person name="Schmutz J."/>
            <person name="Larimer F."/>
            <person name="Land M."/>
            <person name="Kyrpides N."/>
            <person name="Ivanova N."/>
            <person name="Fredrickson J."/>
            <person name="Balkwill D."/>
            <person name="Romine M.F."/>
            <person name="Richardson P."/>
        </authorList>
    </citation>
    <scope>NUCLEOTIDE SEQUENCE [LARGE SCALE GENOMIC DNA]</scope>
    <source>
        <strain>ATCC 700278 / DSM 12444 / CCUG 56034 / CIP 105152 / NBRC 16084 / F199</strain>
    </source>
</reference>
<dbReference type="EMBL" id="CP000248">
    <property type="protein sequence ID" value="ABD25375.1"/>
    <property type="molecule type" value="Genomic_DNA"/>
</dbReference>
<dbReference type="RefSeq" id="WP_011444589.1">
    <property type="nucleotide sequence ID" value="NC_007794.1"/>
</dbReference>
<dbReference type="SMR" id="Q2G9U8"/>
<dbReference type="STRING" id="279238.Saro_0930"/>
<dbReference type="KEGG" id="nar:Saro_0930"/>
<dbReference type="eggNOG" id="COG0211">
    <property type="taxonomic scope" value="Bacteria"/>
</dbReference>
<dbReference type="HOGENOM" id="CLU_095424_4_1_5"/>
<dbReference type="Proteomes" id="UP000009134">
    <property type="component" value="Chromosome"/>
</dbReference>
<dbReference type="GO" id="GO:0022625">
    <property type="term" value="C:cytosolic large ribosomal subunit"/>
    <property type="evidence" value="ECO:0007669"/>
    <property type="project" value="TreeGrafter"/>
</dbReference>
<dbReference type="GO" id="GO:0003735">
    <property type="term" value="F:structural constituent of ribosome"/>
    <property type="evidence" value="ECO:0007669"/>
    <property type="project" value="InterPro"/>
</dbReference>
<dbReference type="GO" id="GO:0006412">
    <property type="term" value="P:translation"/>
    <property type="evidence" value="ECO:0007669"/>
    <property type="project" value="UniProtKB-UniRule"/>
</dbReference>
<dbReference type="FunFam" id="2.40.50.100:FF:000020">
    <property type="entry name" value="50S ribosomal protein L27"/>
    <property type="match status" value="1"/>
</dbReference>
<dbReference type="Gene3D" id="2.40.50.100">
    <property type="match status" value="1"/>
</dbReference>
<dbReference type="HAMAP" id="MF_00539">
    <property type="entry name" value="Ribosomal_bL27"/>
    <property type="match status" value="1"/>
</dbReference>
<dbReference type="InterPro" id="IPR001684">
    <property type="entry name" value="Ribosomal_bL27"/>
</dbReference>
<dbReference type="InterPro" id="IPR018261">
    <property type="entry name" value="Ribosomal_bL27_CS"/>
</dbReference>
<dbReference type="NCBIfam" id="TIGR00062">
    <property type="entry name" value="L27"/>
    <property type="match status" value="1"/>
</dbReference>
<dbReference type="PANTHER" id="PTHR15893:SF0">
    <property type="entry name" value="LARGE RIBOSOMAL SUBUNIT PROTEIN BL27M"/>
    <property type="match status" value="1"/>
</dbReference>
<dbReference type="PANTHER" id="PTHR15893">
    <property type="entry name" value="RIBOSOMAL PROTEIN L27"/>
    <property type="match status" value="1"/>
</dbReference>
<dbReference type="Pfam" id="PF01016">
    <property type="entry name" value="Ribosomal_L27"/>
    <property type="match status" value="1"/>
</dbReference>
<dbReference type="PRINTS" id="PR00063">
    <property type="entry name" value="RIBOSOMALL27"/>
</dbReference>
<dbReference type="SUPFAM" id="SSF110324">
    <property type="entry name" value="Ribosomal L27 protein-like"/>
    <property type="match status" value="1"/>
</dbReference>
<dbReference type="PROSITE" id="PS00831">
    <property type="entry name" value="RIBOSOMAL_L27"/>
    <property type="match status" value="1"/>
</dbReference>
<name>RL27_NOVAD</name>
<accession>Q2G9U8</accession>
<protein>
    <recommendedName>
        <fullName evidence="1">Large ribosomal subunit protein bL27</fullName>
    </recommendedName>
    <alternativeName>
        <fullName evidence="3">50S ribosomal protein L27</fullName>
    </alternativeName>
</protein>